<comment type="function">
    <text evidence="1">This protein specifically catalyzes the removal of signal peptides from prolipoproteins.</text>
</comment>
<comment type="catalytic activity">
    <reaction evidence="1">
        <text>Release of signal peptides from bacterial membrane prolipoproteins. Hydrolyzes -Xaa-Yaa-Zaa-|-(S,diacylglyceryl)Cys-, in which Xaa is hydrophobic (preferably Leu), and Yaa (Ala or Ser) and Zaa (Gly or Ala) have small, neutral side chains.</text>
        <dbReference type="EC" id="3.4.23.36"/>
    </reaction>
</comment>
<comment type="pathway">
    <text evidence="1">Protein modification; lipoprotein biosynthesis (signal peptide cleavage).</text>
</comment>
<comment type="subcellular location">
    <subcellularLocation>
        <location evidence="1">Cell inner membrane</location>
        <topology evidence="1">Multi-pass membrane protein</topology>
    </subcellularLocation>
</comment>
<comment type="similarity">
    <text evidence="1">Belongs to the peptidase A8 family.</text>
</comment>
<gene>
    <name evidence="1" type="primary">lspA</name>
    <name type="ordered locus">Dde_2143</name>
</gene>
<organism>
    <name type="scientific">Oleidesulfovibrio alaskensis (strain ATCC BAA-1058 / DSM 17464 / G20)</name>
    <name type="common">Desulfovibrio alaskensis</name>
    <dbReference type="NCBI Taxonomy" id="207559"/>
    <lineage>
        <taxon>Bacteria</taxon>
        <taxon>Pseudomonadati</taxon>
        <taxon>Thermodesulfobacteriota</taxon>
        <taxon>Desulfovibrionia</taxon>
        <taxon>Desulfovibrionales</taxon>
        <taxon>Desulfovibrionaceae</taxon>
        <taxon>Oleidesulfovibrio</taxon>
    </lineage>
</organism>
<name>LSPA_OLEA2</name>
<accession>Q30ZF6</accession>
<feature type="chain" id="PRO_0000289374" description="Lipoprotein signal peptidase">
    <location>
        <begin position="1"/>
        <end position="156"/>
    </location>
</feature>
<feature type="transmembrane region" description="Helical" evidence="1">
    <location>
        <begin position="5"/>
        <end position="25"/>
    </location>
</feature>
<feature type="transmembrane region" description="Helical" evidence="1">
    <location>
        <begin position="63"/>
        <end position="83"/>
    </location>
</feature>
<feature type="transmembrane region" description="Helical" evidence="1">
    <location>
        <begin position="90"/>
        <end position="110"/>
    </location>
</feature>
<feature type="transmembrane region" description="Helical" evidence="1">
    <location>
        <begin position="133"/>
        <end position="153"/>
    </location>
</feature>
<feature type="active site" evidence="1">
    <location>
        <position position="120"/>
    </location>
</feature>
<feature type="active site" evidence="1">
    <location>
        <position position="138"/>
    </location>
</feature>
<reference key="1">
    <citation type="journal article" date="2011" name="J. Bacteriol.">
        <title>Complete genome sequence and updated annotation of Desulfovibrio alaskensis G20.</title>
        <authorList>
            <person name="Hauser L.J."/>
            <person name="Land M.L."/>
            <person name="Brown S.D."/>
            <person name="Larimer F."/>
            <person name="Keller K.L."/>
            <person name="Rapp-Giles B.J."/>
            <person name="Price M.N."/>
            <person name="Lin M."/>
            <person name="Bruce D.C."/>
            <person name="Detter J.C."/>
            <person name="Tapia R."/>
            <person name="Han C.S."/>
            <person name="Goodwin L.A."/>
            <person name="Cheng J.F."/>
            <person name="Pitluck S."/>
            <person name="Copeland A."/>
            <person name="Lucas S."/>
            <person name="Nolan M."/>
            <person name="Lapidus A.L."/>
            <person name="Palumbo A.V."/>
            <person name="Wall J.D."/>
        </authorList>
    </citation>
    <scope>NUCLEOTIDE SEQUENCE [LARGE SCALE GENOMIC DNA]</scope>
    <source>
        <strain>ATCC BAA-1058 / DSM 17464 / G20</strain>
    </source>
</reference>
<evidence type="ECO:0000255" key="1">
    <source>
        <dbReference type="HAMAP-Rule" id="MF_00161"/>
    </source>
</evidence>
<keyword id="KW-0064">Aspartyl protease</keyword>
<keyword id="KW-0997">Cell inner membrane</keyword>
<keyword id="KW-1003">Cell membrane</keyword>
<keyword id="KW-0378">Hydrolase</keyword>
<keyword id="KW-0472">Membrane</keyword>
<keyword id="KW-0645">Protease</keyword>
<keyword id="KW-1185">Reference proteome</keyword>
<keyword id="KW-0812">Transmembrane</keyword>
<keyword id="KW-1133">Transmembrane helix</keyword>
<sequence>MRPRFFVVYLIAALVIAVDQWTKQWAASTIPPLIGYTVIPGFFDLVNVRNRGAAFGFLNRSDIEWQFWLFFAAAVTAVLAIIAMTRSAKSNPYLFTGFGLIMGGAIGNLIDRIRFRAVIDFLDFHIGGYHWPAFNVADMGICVGAFFVCLAVYKHK</sequence>
<proteinExistence type="inferred from homology"/>
<dbReference type="EC" id="3.4.23.36" evidence="1"/>
<dbReference type="EMBL" id="CP000112">
    <property type="protein sequence ID" value="ABB38940.1"/>
    <property type="molecule type" value="Genomic_DNA"/>
</dbReference>
<dbReference type="RefSeq" id="WP_011368040.1">
    <property type="nucleotide sequence ID" value="NC_007519.1"/>
</dbReference>
<dbReference type="SMR" id="Q30ZF6"/>
<dbReference type="STRING" id="207559.Dde_2143"/>
<dbReference type="KEGG" id="dde:Dde_2143"/>
<dbReference type="eggNOG" id="COG0597">
    <property type="taxonomic scope" value="Bacteria"/>
</dbReference>
<dbReference type="HOGENOM" id="CLU_083252_4_0_7"/>
<dbReference type="UniPathway" id="UPA00665"/>
<dbReference type="Proteomes" id="UP000002710">
    <property type="component" value="Chromosome"/>
</dbReference>
<dbReference type="GO" id="GO:0005886">
    <property type="term" value="C:plasma membrane"/>
    <property type="evidence" value="ECO:0007669"/>
    <property type="project" value="UniProtKB-SubCell"/>
</dbReference>
<dbReference type="GO" id="GO:0004190">
    <property type="term" value="F:aspartic-type endopeptidase activity"/>
    <property type="evidence" value="ECO:0007669"/>
    <property type="project" value="UniProtKB-UniRule"/>
</dbReference>
<dbReference type="GO" id="GO:0006508">
    <property type="term" value="P:proteolysis"/>
    <property type="evidence" value="ECO:0007669"/>
    <property type="project" value="UniProtKB-KW"/>
</dbReference>
<dbReference type="HAMAP" id="MF_00161">
    <property type="entry name" value="LspA"/>
    <property type="match status" value="1"/>
</dbReference>
<dbReference type="InterPro" id="IPR001872">
    <property type="entry name" value="Peptidase_A8"/>
</dbReference>
<dbReference type="NCBIfam" id="TIGR00077">
    <property type="entry name" value="lspA"/>
    <property type="match status" value="1"/>
</dbReference>
<dbReference type="PANTHER" id="PTHR33695">
    <property type="entry name" value="LIPOPROTEIN SIGNAL PEPTIDASE"/>
    <property type="match status" value="1"/>
</dbReference>
<dbReference type="PANTHER" id="PTHR33695:SF1">
    <property type="entry name" value="LIPOPROTEIN SIGNAL PEPTIDASE"/>
    <property type="match status" value="1"/>
</dbReference>
<dbReference type="Pfam" id="PF01252">
    <property type="entry name" value="Peptidase_A8"/>
    <property type="match status" value="1"/>
</dbReference>
<dbReference type="PRINTS" id="PR00781">
    <property type="entry name" value="LIPOSIGPTASE"/>
</dbReference>
<dbReference type="PROSITE" id="PS00855">
    <property type="entry name" value="SPASE_II"/>
    <property type="match status" value="1"/>
</dbReference>
<protein>
    <recommendedName>
        <fullName evidence="1">Lipoprotein signal peptidase</fullName>
        <ecNumber evidence="1">3.4.23.36</ecNumber>
    </recommendedName>
    <alternativeName>
        <fullName evidence="1">Prolipoprotein signal peptidase</fullName>
    </alternativeName>
    <alternativeName>
        <fullName evidence="1">Signal peptidase II</fullName>
        <shortName evidence="1">SPase II</shortName>
    </alternativeName>
</protein>